<name>NMAT3_ARATH</name>
<accession>Q9LZA5</accession>
<accession>F4KI46</accession>
<comment type="function">
    <text evidence="1">Nuclear-encoded maturase required for splicing of group-II introns in mitochondria. Necessary for mitochondrial biogenesis during early developmental stages.</text>
</comment>
<comment type="subcellular location">
    <subcellularLocation>
        <location evidence="4">Mitochondrion</location>
    </subcellularLocation>
</comment>
<comment type="similarity">
    <text evidence="7">Belongs to the plant nuclear intron maturase (nMat) family.</text>
</comment>
<comment type="sequence caution" evidence="7">
    <conflict type="erroneous gene model prediction">
        <sequence resource="EMBL-CDS" id="AED90691"/>
    </conflict>
</comment>
<comment type="sequence caution" evidence="7">
    <conflict type="erroneous gene model prediction">
        <sequence resource="EMBL-CDS" id="CAB85525"/>
    </conflict>
</comment>
<organism>
    <name type="scientific">Arabidopsis thaliana</name>
    <name type="common">Mouse-ear cress</name>
    <dbReference type="NCBI Taxonomy" id="3702"/>
    <lineage>
        <taxon>Eukaryota</taxon>
        <taxon>Viridiplantae</taxon>
        <taxon>Streptophyta</taxon>
        <taxon>Embryophyta</taxon>
        <taxon>Tracheophyta</taxon>
        <taxon>Spermatophyta</taxon>
        <taxon>Magnoliopsida</taxon>
        <taxon>eudicotyledons</taxon>
        <taxon>Gunneridae</taxon>
        <taxon>Pentapetalae</taxon>
        <taxon>rosids</taxon>
        <taxon>malvids</taxon>
        <taxon>Brassicales</taxon>
        <taxon>Brassicaceae</taxon>
        <taxon>Camelineae</taxon>
        <taxon>Arabidopsis</taxon>
    </lineage>
</organism>
<proteinExistence type="inferred from homology"/>
<reference key="1">
    <citation type="journal article" date="2000" name="Nature">
        <title>Sequence and analysis of chromosome 5 of the plant Arabidopsis thaliana.</title>
        <authorList>
            <person name="Tabata S."/>
            <person name="Kaneko T."/>
            <person name="Nakamura Y."/>
            <person name="Kotani H."/>
            <person name="Kato T."/>
            <person name="Asamizu E."/>
            <person name="Miyajima N."/>
            <person name="Sasamoto S."/>
            <person name="Kimura T."/>
            <person name="Hosouchi T."/>
            <person name="Kawashima K."/>
            <person name="Kohara M."/>
            <person name="Matsumoto M."/>
            <person name="Matsuno A."/>
            <person name="Muraki A."/>
            <person name="Nakayama S."/>
            <person name="Nakazaki N."/>
            <person name="Naruo K."/>
            <person name="Okumura S."/>
            <person name="Shinpo S."/>
            <person name="Takeuchi C."/>
            <person name="Wada T."/>
            <person name="Watanabe A."/>
            <person name="Yamada M."/>
            <person name="Yasuda M."/>
            <person name="Sato S."/>
            <person name="de la Bastide M."/>
            <person name="Huang E."/>
            <person name="Spiegel L."/>
            <person name="Gnoj L."/>
            <person name="O'Shaughnessy A."/>
            <person name="Preston R."/>
            <person name="Habermann K."/>
            <person name="Murray J."/>
            <person name="Johnson D."/>
            <person name="Rohlfing T."/>
            <person name="Nelson J."/>
            <person name="Stoneking T."/>
            <person name="Pepin K."/>
            <person name="Spieth J."/>
            <person name="Sekhon M."/>
            <person name="Armstrong J."/>
            <person name="Becker M."/>
            <person name="Belter E."/>
            <person name="Cordum H."/>
            <person name="Cordes M."/>
            <person name="Courtney L."/>
            <person name="Courtney W."/>
            <person name="Dante M."/>
            <person name="Du H."/>
            <person name="Edwards J."/>
            <person name="Fryman J."/>
            <person name="Haakensen B."/>
            <person name="Lamar E."/>
            <person name="Latreille P."/>
            <person name="Leonard S."/>
            <person name="Meyer R."/>
            <person name="Mulvaney E."/>
            <person name="Ozersky P."/>
            <person name="Riley A."/>
            <person name="Strowmatt C."/>
            <person name="Wagner-McPherson C."/>
            <person name="Wollam A."/>
            <person name="Yoakum M."/>
            <person name="Bell M."/>
            <person name="Dedhia N."/>
            <person name="Parnell L."/>
            <person name="Shah R."/>
            <person name="Rodriguez M."/>
            <person name="Hoon See L."/>
            <person name="Vil D."/>
            <person name="Baker J."/>
            <person name="Kirchoff K."/>
            <person name="Toth K."/>
            <person name="King L."/>
            <person name="Bahret A."/>
            <person name="Miller B."/>
            <person name="Marra M.A."/>
            <person name="Martienssen R."/>
            <person name="McCombie W.R."/>
            <person name="Wilson R.K."/>
            <person name="Murphy G."/>
            <person name="Bancroft I."/>
            <person name="Volckaert G."/>
            <person name="Wambutt R."/>
            <person name="Duesterhoeft A."/>
            <person name="Stiekema W."/>
            <person name="Pohl T."/>
            <person name="Entian K.-D."/>
            <person name="Terryn N."/>
            <person name="Hartley N."/>
            <person name="Bent E."/>
            <person name="Johnson S."/>
            <person name="Langham S.-A."/>
            <person name="McCullagh B."/>
            <person name="Robben J."/>
            <person name="Grymonprez B."/>
            <person name="Zimmermann W."/>
            <person name="Ramsperger U."/>
            <person name="Wedler H."/>
            <person name="Balke K."/>
            <person name="Wedler E."/>
            <person name="Peters S."/>
            <person name="van Staveren M."/>
            <person name="Dirkse W."/>
            <person name="Mooijman P."/>
            <person name="Klein Lankhorst R."/>
            <person name="Weitzenegger T."/>
            <person name="Bothe G."/>
            <person name="Rose M."/>
            <person name="Hauf J."/>
            <person name="Berneiser S."/>
            <person name="Hempel S."/>
            <person name="Feldpausch M."/>
            <person name="Lamberth S."/>
            <person name="Villarroel R."/>
            <person name="Gielen J."/>
            <person name="Ardiles W."/>
            <person name="Bents O."/>
            <person name="Lemcke K."/>
            <person name="Kolesov G."/>
            <person name="Mayer K.F.X."/>
            <person name="Rudd S."/>
            <person name="Schoof H."/>
            <person name="Schueller C."/>
            <person name="Zaccaria P."/>
            <person name="Mewes H.-W."/>
            <person name="Bevan M."/>
            <person name="Fransz P.F."/>
        </authorList>
    </citation>
    <scope>NUCLEOTIDE SEQUENCE [LARGE SCALE GENOMIC DNA]</scope>
    <source>
        <strain>cv. Columbia</strain>
    </source>
</reference>
<reference key="2">
    <citation type="journal article" date="2017" name="Plant J.">
        <title>Araport11: a complete reannotation of the Arabidopsis thaliana reference genome.</title>
        <authorList>
            <person name="Cheng C.Y."/>
            <person name="Krishnakumar V."/>
            <person name="Chan A.P."/>
            <person name="Thibaud-Nissen F."/>
            <person name="Schobel S."/>
            <person name="Town C.D."/>
        </authorList>
    </citation>
    <scope>GENOME REANNOTATION</scope>
    <source>
        <strain>cv. Columbia</strain>
    </source>
</reference>
<reference key="3">
    <citation type="journal article" date="2003" name="Nucleic Acids Res.">
        <title>Putative proteins related to group II intron reverse transcriptase/maturases are encoded by nuclear genes in higher plants.</title>
        <authorList>
            <person name="Mohr G."/>
            <person name="Lambowitz A.M."/>
        </authorList>
    </citation>
    <scope>GENE FAMILY</scope>
</reference>
<reference key="4">
    <citation type="journal article" date="2009" name="RNA">
        <title>AtnMat2, a nuclear-encoded maturase required for splicing of group-II introns in Arabidopsis mitochondria.</title>
        <authorList>
            <person name="Keren I."/>
            <person name="Bezawork-Geleta A."/>
            <person name="Kolton M."/>
            <person name="Maayan I."/>
            <person name="Belausov E."/>
            <person name="Levy M."/>
            <person name="Mett A."/>
            <person name="Gidoni D."/>
            <person name="Shaya F."/>
            <person name="Ostersetzer-Biran O."/>
        </authorList>
    </citation>
    <scope>SUBCELLULAR LOCATION</scope>
    <scope>GENE FAMILY</scope>
    <scope>NOMENCLATURE</scope>
    <source>
        <strain>cv. Columbia</strain>
    </source>
</reference>
<reference key="5">
    <citation type="journal article" date="2014" name="Front. Plant Sci.">
        <title>Group II intron splicing factors in plant mitochondria.</title>
        <authorList>
            <person name="Brown G.G."/>
            <person name="Colas des Francs-Small C."/>
            <person name="Ostersetzer-Biran O."/>
        </authorList>
    </citation>
    <scope>REVIEW ON SPLICING FACTORS</scope>
    <source>
        <strain>cv. Columbia</strain>
    </source>
</reference>
<protein>
    <recommendedName>
        <fullName evidence="6">Nuclear intron maturase 3, mitochondrial</fullName>
        <shortName evidence="6">AtnMat3</shortName>
        <ecNumber>3.1.-.-</ecNumber>
    </recommendedName>
    <alternativeName>
        <fullName evidence="5">Nuclear intron maturase 2 a</fullName>
        <shortName evidence="5">AtnMat2a</shortName>
    </alternativeName>
</protein>
<sequence length="723" mass="83496">MVLRLRVHSFYNRGISFLVSSSLRNLSTASSLFLNSDQTITEPLVKSELEALVLKQYSHGKFYSLVKNAVSLPCVLLAACQNLSLSANSSGDLADRVSRRFSIEEMGREIREGRFDIRSCCVEFISSSLVLPNLKLKVLIEAIRMVLEIVYDDRFATFSYGGRVGMGRHTAIRYLKNSVENPRWWFRVSFAREMFEERNVDILCGFVGEKINDVMLIEMIKKLFEFGILKIELGGCNSGRGFPQECGLCSILINVYFDGLDKEIQDLRLKMKVKNPRVGTGDEESTGNVFFKPVNIYAVRYLDEILVITSGSKMLTMDLKKRIVDILEQRLELRVDRLNTSIHSAVSEKINFLGMYLQAVPPSVLRPPKSEKAVRAMKKYQRQKDVRKLELRNARERNRKTLGLKIFRHVLKKIKQSNGFKFEGEIENEVRDIFQSWGEEVMQDFMGSLEERWKWHWLLTRGDFLSLRHIREKLPQDLIDAYDEFQEQVDKHLAPTQAKKVLEDEERRVEEEEEQRYAERTVEDLTKLCMKVSAPEELVRKAIKLVGFTNSMGRPRPIIHLVTLEDSDIIKWYARHEKHGSTKKLIRHYTKDLRVSDLDGREEAHFPSEREVKMMGDKNLSDPKPVDGTLSLLLIRLASDEPLHHCAASFCERSDTIMHRVHLLQNRLHINPLDEEKWVPGMGTIHSALNRKCLPLCSTHISDVYLGKITLQDVDSSSFIDLR</sequence>
<keyword id="KW-0238">DNA-binding</keyword>
<keyword id="KW-0255">Endonuclease</keyword>
<keyword id="KW-0378">Hydrolase</keyword>
<keyword id="KW-0404">Intron homing</keyword>
<keyword id="KW-0479">Metal-binding</keyword>
<keyword id="KW-0496">Mitochondrion</keyword>
<keyword id="KW-0540">Nuclease</keyword>
<keyword id="KW-0548">Nucleotidyltransferase</keyword>
<keyword id="KW-1185">Reference proteome</keyword>
<keyword id="KW-0695">RNA-directed DNA polymerase</keyword>
<keyword id="KW-0808">Transferase</keyword>
<keyword id="KW-0809">Transit peptide</keyword>
<keyword id="KW-0862">Zinc</keyword>
<keyword id="KW-0863">Zinc-finger</keyword>
<feature type="transit peptide" description="Mitochondrion" evidence="2">
    <location>
        <begin position="1"/>
        <end position="26"/>
    </location>
</feature>
<feature type="chain" id="PRO_0000440121" description="Nuclear intron maturase 3, mitochondrial">
    <location>
        <begin position="27"/>
        <end position="723"/>
    </location>
</feature>
<feature type="zinc finger region" description="THAP-type" evidence="3">
    <location>
        <begin position="646"/>
        <end position="700"/>
    </location>
</feature>
<feature type="region of interest" description="Intron maturase type-2; degenerate" evidence="2">
    <location>
        <begin position="532"/>
        <end position="597"/>
    </location>
</feature>
<dbReference type="EC" id="3.1.-.-"/>
<dbReference type="EMBL" id="AL162873">
    <property type="protein sequence ID" value="CAB85525.1"/>
    <property type="status" value="ALT_SEQ"/>
    <property type="molecule type" value="Genomic_DNA"/>
</dbReference>
<dbReference type="EMBL" id="CP002688">
    <property type="protein sequence ID" value="AED90691.1"/>
    <property type="status" value="ALT_SEQ"/>
    <property type="molecule type" value="Genomic_DNA"/>
</dbReference>
<dbReference type="PIR" id="T48432">
    <property type="entry name" value="T48432"/>
</dbReference>
<dbReference type="RefSeq" id="NP_001154695.1">
    <property type="nucleotide sequence ID" value="NM_001161223.1"/>
</dbReference>
<dbReference type="SMR" id="Q9LZA5"/>
<dbReference type="STRING" id="3702.Q9LZA5"/>
<dbReference type="PaxDb" id="3702-AT5G04050.2"/>
<dbReference type="ProteomicsDB" id="251183"/>
<dbReference type="GeneID" id="830284"/>
<dbReference type="KEGG" id="ath:AT5G04050"/>
<dbReference type="Araport" id="AT5G04050"/>
<dbReference type="TAIR" id="AT5G04050"/>
<dbReference type="eggNOG" id="KOG1075">
    <property type="taxonomic scope" value="Eukaryota"/>
</dbReference>
<dbReference type="InParanoid" id="Q9LZA5"/>
<dbReference type="PhylomeDB" id="Q9LZA5"/>
<dbReference type="PRO" id="PR:Q9LZA5"/>
<dbReference type="Proteomes" id="UP000006548">
    <property type="component" value="Chromosome 5"/>
</dbReference>
<dbReference type="ExpressionAtlas" id="Q9LZA5">
    <property type="expression patterns" value="baseline and differential"/>
</dbReference>
<dbReference type="GO" id="GO:0005739">
    <property type="term" value="C:mitochondrion"/>
    <property type="evidence" value="ECO:0000314"/>
    <property type="project" value="UniProtKB"/>
</dbReference>
<dbReference type="GO" id="GO:0003677">
    <property type="term" value="F:DNA binding"/>
    <property type="evidence" value="ECO:0007669"/>
    <property type="project" value="UniProtKB-KW"/>
</dbReference>
<dbReference type="GO" id="GO:0004519">
    <property type="term" value="F:endonuclease activity"/>
    <property type="evidence" value="ECO:0007669"/>
    <property type="project" value="UniProtKB-KW"/>
</dbReference>
<dbReference type="GO" id="GO:0003964">
    <property type="term" value="F:RNA-directed DNA polymerase activity"/>
    <property type="evidence" value="ECO:0000318"/>
    <property type="project" value="GO_Central"/>
</dbReference>
<dbReference type="GO" id="GO:0008270">
    <property type="term" value="F:zinc ion binding"/>
    <property type="evidence" value="ECO:0007669"/>
    <property type="project" value="UniProtKB-KW"/>
</dbReference>
<dbReference type="GO" id="GO:0000373">
    <property type="term" value="P:Group II intron splicing"/>
    <property type="evidence" value="ECO:0000250"/>
    <property type="project" value="UniProtKB"/>
</dbReference>
<dbReference type="GO" id="GO:0006315">
    <property type="term" value="P:homing of group II introns"/>
    <property type="evidence" value="ECO:0000318"/>
    <property type="project" value="GO_Central"/>
</dbReference>
<dbReference type="GO" id="GO:0090615">
    <property type="term" value="P:mitochondrial mRNA processing"/>
    <property type="evidence" value="ECO:0000250"/>
    <property type="project" value="UniProtKB"/>
</dbReference>
<dbReference type="GO" id="GO:0008380">
    <property type="term" value="P:RNA splicing"/>
    <property type="evidence" value="ECO:0000315"/>
    <property type="project" value="TAIR"/>
</dbReference>
<dbReference type="CDD" id="cd01651">
    <property type="entry name" value="RT_G2_intron"/>
    <property type="match status" value="1"/>
</dbReference>
<dbReference type="PANTHER" id="PTHR33642">
    <property type="entry name" value="COX1/OXI3 INTRON 1 PROTEIN-RELATED"/>
    <property type="match status" value="1"/>
</dbReference>
<dbReference type="PANTHER" id="PTHR33642:SF4">
    <property type="entry name" value="COX1_OXI3 INTRON 1 PROTEIN-RELATED"/>
    <property type="match status" value="1"/>
</dbReference>
<gene>
    <name evidence="6" type="primary">NMAT3</name>
    <name evidence="5" type="synonym">NMAT2A</name>
    <name evidence="8" type="ordered locus">At5g04050</name>
    <name evidence="9" type="ORF">F8F6.260</name>
</gene>
<evidence type="ECO:0000250" key="1">
    <source>
        <dbReference type="UniProtKB" id="Q9CA78"/>
    </source>
</evidence>
<evidence type="ECO:0000255" key="2"/>
<evidence type="ECO:0000255" key="3">
    <source>
        <dbReference type="PROSITE-ProRule" id="PRU00309"/>
    </source>
</evidence>
<evidence type="ECO:0000269" key="4">
    <source>
    </source>
</evidence>
<evidence type="ECO:0000303" key="5">
    <source>
    </source>
</evidence>
<evidence type="ECO:0000303" key="6">
    <source>
    </source>
</evidence>
<evidence type="ECO:0000305" key="7"/>
<evidence type="ECO:0000312" key="8">
    <source>
        <dbReference type="Araport" id="AT5G04050"/>
    </source>
</evidence>
<evidence type="ECO:0000312" key="9">
    <source>
        <dbReference type="EMBL" id="CAB85525.1"/>
    </source>
</evidence>